<protein>
    <recommendedName>
        <fullName evidence="1">Large ribosomal subunit protein uL1</fullName>
    </recommendedName>
    <alternativeName>
        <fullName evidence="2">50S ribosomal protein L1</fullName>
    </alternativeName>
</protein>
<keyword id="KW-1185">Reference proteome</keyword>
<keyword id="KW-0678">Repressor</keyword>
<keyword id="KW-0687">Ribonucleoprotein</keyword>
<keyword id="KW-0689">Ribosomal protein</keyword>
<keyword id="KW-0694">RNA-binding</keyword>
<keyword id="KW-0699">rRNA-binding</keyword>
<keyword id="KW-0810">Translation regulation</keyword>
<keyword id="KW-0820">tRNA-binding</keyword>
<reference key="1">
    <citation type="journal article" date="2003" name="Proc. Natl. Acad. Sci. U.S.A.">
        <title>The genome sequence of Clostridium tetani, the causative agent of tetanus disease.</title>
        <authorList>
            <person name="Brueggemann H."/>
            <person name="Baeumer S."/>
            <person name="Fricke W.F."/>
            <person name="Wiezer A."/>
            <person name="Liesegang H."/>
            <person name="Decker I."/>
            <person name="Herzberg C."/>
            <person name="Martinez-Arias R."/>
            <person name="Merkl R."/>
            <person name="Henne A."/>
            <person name="Gottschalk G."/>
        </authorList>
    </citation>
    <scope>NUCLEOTIDE SEQUENCE [LARGE SCALE GENOMIC DNA]</scope>
    <source>
        <strain>Massachusetts / E88</strain>
    </source>
</reference>
<evidence type="ECO:0000255" key="1">
    <source>
        <dbReference type="HAMAP-Rule" id="MF_01318"/>
    </source>
</evidence>
<evidence type="ECO:0000305" key="2"/>
<feature type="chain" id="PRO_0000125646" description="Large ribosomal subunit protein uL1">
    <location>
        <begin position="1"/>
        <end position="229"/>
    </location>
</feature>
<proteinExistence type="inferred from homology"/>
<gene>
    <name evidence="1" type="primary">rplA</name>
    <name type="ordered locus">CTC_02611</name>
</gene>
<name>RL1_CLOTE</name>
<sequence>MGKNYAESAKLIDKSTLYSSEEAMNLVVKTSKANFDETIDLAVRLGVDPRHADQQVRGAIILPHGTGKKVKVLVFAKGEKAKEAEAAGADFVGAEELVEKIQKENWFDYDVVVATPDMMGVVGRLGRVLGPKGLMPNPKSGTVTFDVAKALNDIKAGKVEYRVDKTAIIHVVIGKKSFGPEKLKDNFRVLMDAIIKAKPSAAKGQYLKSVSVSSTMGPGVKINPSKVLD</sequence>
<dbReference type="EMBL" id="AE015927">
    <property type="protein sequence ID" value="AAO37064.1"/>
    <property type="molecule type" value="Genomic_DNA"/>
</dbReference>
<dbReference type="RefSeq" id="WP_011100725.1">
    <property type="nucleotide sequence ID" value="NC_004557.1"/>
</dbReference>
<dbReference type="SMR" id="Q890N2"/>
<dbReference type="STRING" id="212717.CTC_02611"/>
<dbReference type="GeneID" id="24254824"/>
<dbReference type="KEGG" id="ctc:CTC_02611"/>
<dbReference type="HOGENOM" id="CLU_062853_0_0_9"/>
<dbReference type="OrthoDB" id="9803740at2"/>
<dbReference type="Proteomes" id="UP000001412">
    <property type="component" value="Chromosome"/>
</dbReference>
<dbReference type="GO" id="GO:0015934">
    <property type="term" value="C:large ribosomal subunit"/>
    <property type="evidence" value="ECO:0007669"/>
    <property type="project" value="InterPro"/>
</dbReference>
<dbReference type="GO" id="GO:0019843">
    <property type="term" value="F:rRNA binding"/>
    <property type="evidence" value="ECO:0007669"/>
    <property type="project" value="UniProtKB-UniRule"/>
</dbReference>
<dbReference type="GO" id="GO:0003735">
    <property type="term" value="F:structural constituent of ribosome"/>
    <property type="evidence" value="ECO:0007669"/>
    <property type="project" value="InterPro"/>
</dbReference>
<dbReference type="GO" id="GO:0000049">
    <property type="term" value="F:tRNA binding"/>
    <property type="evidence" value="ECO:0007669"/>
    <property type="project" value="UniProtKB-KW"/>
</dbReference>
<dbReference type="GO" id="GO:0006417">
    <property type="term" value="P:regulation of translation"/>
    <property type="evidence" value="ECO:0007669"/>
    <property type="project" value="UniProtKB-KW"/>
</dbReference>
<dbReference type="GO" id="GO:0006412">
    <property type="term" value="P:translation"/>
    <property type="evidence" value="ECO:0007669"/>
    <property type="project" value="UniProtKB-UniRule"/>
</dbReference>
<dbReference type="CDD" id="cd00403">
    <property type="entry name" value="Ribosomal_L1"/>
    <property type="match status" value="1"/>
</dbReference>
<dbReference type="FunFam" id="3.40.50.790:FF:000001">
    <property type="entry name" value="50S ribosomal protein L1"/>
    <property type="match status" value="1"/>
</dbReference>
<dbReference type="Gene3D" id="3.30.190.20">
    <property type="match status" value="1"/>
</dbReference>
<dbReference type="Gene3D" id="3.40.50.790">
    <property type="match status" value="1"/>
</dbReference>
<dbReference type="HAMAP" id="MF_01318_B">
    <property type="entry name" value="Ribosomal_uL1_B"/>
    <property type="match status" value="1"/>
</dbReference>
<dbReference type="InterPro" id="IPR005878">
    <property type="entry name" value="Ribosom_uL1_bac-type"/>
</dbReference>
<dbReference type="InterPro" id="IPR002143">
    <property type="entry name" value="Ribosomal_uL1"/>
</dbReference>
<dbReference type="InterPro" id="IPR023674">
    <property type="entry name" value="Ribosomal_uL1-like"/>
</dbReference>
<dbReference type="InterPro" id="IPR028364">
    <property type="entry name" value="Ribosomal_uL1/biogenesis"/>
</dbReference>
<dbReference type="InterPro" id="IPR016095">
    <property type="entry name" value="Ribosomal_uL1_3-a/b-sand"/>
</dbReference>
<dbReference type="InterPro" id="IPR023673">
    <property type="entry name" value="Ribosomal_uL1_CS"/>
</dbReference>
<dbReference type="NCBIfam" id="TIGR01169">
    <property type="entry name" value="rplA_bact"/>
    <property type="match status" value="1"/>
</dbReference>
<dbReference type="PANTHER" id="PTHR36427">
    <property type="entry name" value="54S RIBOSOMAL PROTEIN L1, MITOCHONDRIAL"/>
    <property type="match status" value="1"/>
</dbReference>
<dbReference type="PANTHER" id="PTHR36427:SF3">
    <property type="entry name" value="LARGE RIBOSOMAL SUBUNIT PROTEIN UL1M"/>
    <property type="match status" value="1"/>
</dbReference>
<dbReference type="Pfam" id="PF00687">
    <property type="entry name" value="Ribosomal_L1"/>
    <property type="match status" value="1"/>
</dbReference>
<dbReference type="PIRSF" id="PIRSF002155">
    <property type="entry name" value="Ribosomal_L1"/>
    <property type="match status" value="1"/>
</dbReference>
<dbReference type="SUPFAM" id="SSF56808">
    <property type="entry name" value="Ribosomal protein L1"/>
    <property type="match status" value="1"/>
</dbReference>
<dbReference type="PROSITE" id="PS01199">
    <property type="entry name" value="RIBOSOMAL_L1"/>
    <property type="match status" value="1"/>
</dbReference>
<accession>Q890N2</accession>
<organism>
    <name type="scientific">Clostridium tetani (strain Massachusetts / E88)</name>
    <dbReference type="NCBI Taxonomy" id="212717"/>
    <lineage>
        <taxon>Bacteria</taxon>
        <taxon>Bacillati</taxon>
        <taxon>Bacillota</taxon>
        <taxon>Clostridia</taxon>
        <taxon>Eubacteriales</taxon>
        <taxon>Clostridiaceae</taxon>
        <taxon>Clostridium</taxon>
    </lineage>
</organism>
<comment type="function">
    <text evidence="1">Binds directly to 23S rRNA. The L1 stalk is quite mobile in the ribosome, and is involved in E site tRNA release.</text>
</comment>
<comment type="function">
    <text evidence="1">Protein L1 is also a translational repressor protein, it controls the translation of the L11 operon by binding to its mRNA.</text>
</comment>
<comment type="subunit">
    <text evidence="1">Part of the 50S ribosomal subunit.</text>
</comment>
<comment type="similarity">
    <text evidence="1">Belongs to the universal ribosomal protein uL1 family.</text>
</comment>